<proteinExistence type="inferred from homology"/>
<dbReference type="EC" id="1.1.1.94" evidence="1"/>
<dbReference type="EMBL" id="CP001138">
    <property type="protein sequence ID" value="ACH52166.1"/>
    <property type="molecule type" value="Genomic_DNA"/>
</dbReference>
<dbReference type="RefSeq" id="WP_001076596.1">
    <property type="nucleotide sequence ID" value="NC_011149.1"/>
</dbReference>
<dbReference type="SMR" id="B5EXB5"/>
<dbReference type="KEGG" id="sea:SeAg_B3918"/>
<dbReference type="HOGENOM" id="CLU_033449_0_2_6"/>
<dbReference type="UniPathway" id="UPA00940"/>
<dbReference type="Proteomes" id="UP000008819">
    <property type="component" value="Chromosome"/>
</dbReference>
<dbReference type="GO" id="GO:0005829">
    <property type="term" value="C:cytosol"/>
    <property type="evidence" value="ECO:0007669"/>
    <property type="project" value="TreeGrafter"/>
</dbReference>
<dbReference type="GO" id="GO:0047952">
    <property type="term" value="F:glycerol-3-phosphate dehydrogenase [NAD(P)+] activity"/>
    <property type="evidence" value="ECO:0007669"/>
    <property type="project" value="UniProtKB-UniRule"/>
</dbReference>
<dbReference type="GO" id="GO:0051287">
    <property type="term" value="F:NAD binding"/>
    <property type="evidence" value="ECO:0007669"/>
    <property type="project" value="InterPro"/>
</dbReference>
<dbReference type="GO" id="GO:0005975">
    <property type="term" value="P:carbohydrate metabolic process"/>
    <property type="evidence" value="ECO:0007669"/>
    <property type="project" value="InterPro"/>
</dbReference>
<dbReference type="GO" id="GO:0046167">
    <property type="term" value="P:glycerol-3-phosphate biosynthetic process"/>
    <property type="evidence" value="ECO:0007669"/>
    <property type="project" value="UniProtKB-UniRule"/>
</dbReference>
<dbReference type="GO" id="GO:0046168">
    <property type="term" value="P:glycerol-3-phosphate catabolic process"/>
    <property type="evidence" value="ECO:0007669"/>
    <property type="project" value="InterPro"/>
</dbReference>
<dbReference type="GO" id="GO:0046474">
    <property type="term" value="P:glycerophospholipid biosynthetic process"/>
    <property type="evidence" value="ECO:0007669"/>
    <property type="project" value="TreeGrafter"/>
</dbReference>
<dbReference type="FunFam" id="1.10.1040.10:FF:000001">
    <property type="entry name" value="Glycerol-3-phosphate dehydrogenase [NAD(P)+]"/>
    <property type="match status" value="1"/>
</dbReference>
<dbReference type="FunFam" id="3.40.50.720:FF:000019">
    <property type="entry name" value="Glycerol-3-phosphate dehydrogenase [NAD(P)+]"/>
    <property type="match status" value="1"/>
</dbReference>
<dbReference type="Gene3D" id="1.10.1040.10">
    <property type="entry name" value="N-(1-d-carboxylethyl)-l-norvaline Dehydrogenase, domain 2"/>
    <property type="match status" value="1"/>
</dbReference>
<dbReference type="Gene3D" id="3.40.50.720">
    <property type="entry name" value="NAD(P)-binding Rossmann-like Domain"/>
    <property type="match status" value="1"/>
</dbReference>
<dbReference type="HAMAP" id="MF_00394">
    <property type="entry name" value="NAD_Glyc3P_dehydrog"/>
    <property type="match status" value="1"/>
</dbReference>
<dbReference type="InterPro" id="IPR008927">
    <property type="entry name" value="6-PGluconate_DH-like_C_sf"/>
</dbReference>
<dbReference type="InterPro" id="IPR013328">
    <property type="entry name" value="6PGD_dom2"/>
</dbReference>
<dbReference type="InterPro" id="IPR006168">
    <property type="entry name" value="G3P_DH_NAD-dep"/>
</dbReference>
<dbReference type="InterPro" id="IPR006109">
    <property type="entry name" value="G3P_DH_NAD-dep_C"/>
</dbReference>
<dbReference type="InterPro" id="IPR011128">
    <property type="entry name" value="G3P_DH_NAD-dep_N"/>
</dbReference>
<dbReference type="InterPro" id="IPR036291">
    <property type="entry name" value="NAD(P)-bd_dom_sf"/>
</dbReference>
<dbReference type="NCBIfam" id="NF000939">
    <property type="entry name" value="PRK00094.1-1"/>
    <property type="match status" value="1"/>
</dbReference>
<dbReference type="NCBIfam" id="NF000940">
    <property type="entry name" value="PRK00094.1-2"/>
    <property type="match status" value="1"/>
</dbReference>
<dbReference type="NCBIfam" id="NF000942">
    <property type="entry name" value="PRK00094.1-4"/>
    <property type="match status" value="1"/>
</dbReference>
<dbReference type="PANTHER" id="PTHR11728">
    <property type="entry name" value="GLYCEROL-3-PHOSPHATE DEHYDROGENASE"/>
    <property type="match status" value="1"/>
</dbReference>
<dbReference type="PANTHER" id="PTHR11728:SF1">
    <property type="entry name" value="GLYCEROL-3-PHOSPHATE DEHYDROGENASE [NAD(+)] 2, CHLOROPLASTIC"/>
    <property type="match status" value="1"/>
</dbReference>
<dbReference type="Pfam" id="PF07479">
    <property type="entry name" value="NAD_Gly3P_dh_C"/>
    <property type="match status" value="1"/>
</dbReference>
<dbReference type="Pfam" id="PF01210">
    <property type="entry name" value="NAD_Gly3P_dh_N"/>
    <property type="match status" value="1"/>
</dbReference>
<dbReference type="PIRSF" id="PIRSF000114">
    <property type="entry name" value="Glycerol-3-P_dh"/>
    <property type="match status" value="1"/>
</dbReference>
<dbReference type="PRINTS" id="PR00077">
    <property type="entry name" value="GPDHDRGNASE"/>
</dbReference>
<dbReference type="SUPFAM" id="SSF48179">
    <property type="entry name" value="6-phosphogluconate dehydrogenase C-terminal domain-like"/>
    <property type="match status" value="1"/>
</dbReference>
<dbReference type="SUPFAM" id="SSF51735">
    <property type="entry name" value="NAD(P)-binding Rossmann-fold domains"/>
    <property type="match status" value="1"/>
</dbReference>
<dbReference type="PROSITE" id="PS00957">
    <property type="entry name" value="NAD_G3PDH"/>
    <property type="match status" value="1"/>
</dbReference>
<sequence length="339" mass="36343">MNQSNASMTVIGAGSYGTALAITLARNGHQVVLWGHDPKHIATLEHDRCNVAFLPDVPFPDTLHLESDLATALAASRNILVVVPSHVFSDVLRQIKPLMRPDARLVWATKGLEAETGRLLQDVAREALGDQIPLAVISGPTFAKELAAGLPTAISLASTDETFADDLQQLLHCGKSFRVYINADFIGVQLGGAVKNVIAIGAGMSDGIGFGANARTALITRGLTEMSRLGAALGADPATFMGMAGLGDLVLTCTDNQSRNRRFGMMLGQGMDVKGAQDKIGQVVEGYRNTKEVRELAHRFGVEMPITEEIYQVLYCGKNAREAALTLLGRARKEELSRH</sequence>
<name>GPDA_SALA4</name>
<gene>
    <name evidence="1" type="primary">gpsA</name>
    <name type="ordered locus">SeAg_B3918</name>
</gene>
<evidence type="ECO:0000255" key="1">
    <source>
        <dbReference type="HAMAP-Rule" id="MF_00394"/>
    </source>
</evidence>
<protein>
    <recommendedName>
        <fullName evidence="1">Glycerol-3-phosphate dehydrogenase [NAD(P)+]</fullName>
        <ecNumber evidence="1">1.1.1.94</ecNumber>
    </recommendedName>
    <alternativeName>
        <fullName evidence="1">NAD(P)(+)-dependent glycerol-3-phosphate dehydrogenase</fullName>
    </alternativeName>
    <alternativeName>
        <fullName evidence="1">NAD(P)H-dependent dihydroxyacetone-phosphate reductase</fullName>
    </alternativeName>
</protein>
<organism>
    <name type="scientific">Salmonella agona (strain SL483)</name>
    <dbReference type="NCBI Taxonomy" id="454166"/>
    <lineage>
        <taxon>Bacteria</taxon>
        <taxon>Pseudomonadati</taxon>
        <taxon>Pseudomonadota</taxon>
        <taxon>Gammaproteobacteria</taxon>
        <taxon>Enterobacterales</taxon>
        <taxon>Enterobacteriaceae</taxon>
        <taxon>Salmonella</taxon>
    </lineage>
</organism>
<accession>B5EXB5</accession>
<comment type="function">
    <text evidence="1">Catalyzes the reduction of the glycolytic intermediate dihydroxyacetone phosphate (DHAP) to sn-glycerol 3-phosphate (G3P), the key precursor for phospholipid synthesis.</text>
</comment>
<comment type="catalytic activity">
    <reaction evidence="1">
        <text>sn-glycerol 3-phosphate + NAD(+) = dihydroxyacetone phosphate + NADH + H(+)</text>
        <dbReference type="Rhea" id="RHEA:11092"/>
        <dbReference type="ChEBI" id="CHEBI:15378"/>
        <dbReference type="ChEBI" id="CHEBI:57540"/>
        <dbReference type="ChEBI" id="CHEBI:57597"/>
        <dbReference type="ChEBI" id="CHEBI:57642"/>
        <dbReference type="ChEBI" id="CHEBI:57945"/>
        <dbReference type="EC" id="1.1.1.94"/>
    </reaction>
    <physiologicalReaction direction="right-to-left" evidence="1">
        <dbReference type="Rhea" id="RHEA:11094"/>
    </physiologicalReaction>
</comment>
<comment type="catalytic activity">
    <reaction evidence="1">
        <text>sn-glycerol 3-phosphate + NADP(+) = dihydroxyacetone phosphate + NADPH + H(+)</text>
        <dbReference type="Rhea" id="RHEA:11096"/>
        <dbReference type="ChEBI" id="CHEBI:15378"/>
        <dbReference type="ChEBI" id="CHEBI:57597"/>
        <dbReference type="ChEBI" id="CHEBI:57642"/>
        <dbReference type="ChEBI" id="CHEBI:57783"/>
        <dbReference type="ChEBI" id="CHEBI:58349"/>
        <dbReference type="EC" id="1.1.1.94"/>
    </reaction>
    <physiologicalReaction direction="right-to-left" evidence="1">
        <dbReference type="Rhea" id="RHEA:11098"/>
    </physiologicalReaction>
</comment>
<comment type="pathway">
    <text evidence="1">Membrane lipid metabolism; glycerophospholipid metabolism.</text>
</comment>
<comment type="subcellular location">
    <subcellularLocation>
        <location evidence="1">Cytoplasm</location>
    </subcellularLocation>
</comment>
<comment type="similarity">
    <text evidence="1">Belongs to the NAD-dependent glycerol-3-phosphate dehydrogenase family.</text>
</comment>
<keyword id="KW-0963">Cytoplasm</keyword>
<keyword id="KW-0444">Lipid biosynthesis</keyword>
<keyword id="KW-0443">Lipid metabolism</keyword>
<keyword id="KW-0520">NAD</keyword>
<keyword id="KW-0521">NADP</keyword>
<keyword id="KW-0547">Nucleotide-binding</keyword>
<keyword id="KW-0560">Oxidoreductase</keyword>
<keyword id="KW-0594">Phospholipid biosynthesis</keyword>
<keyword id="KW-1208">Phospholipid metabolism</keyword>
<reference key="1">
    <citation type="journal article" date="2011" name="J. Bacteriol.">
        <title>Comparative genomics of 28 Salmonella enterica isolates: evidence for CRISPR-mediated adaptive sublineage evolution.</title>
        <authorList>
            <person name="Fricke W.F."/>
            <person name="Mammel M.K."/>
            <person name="McDermott P.F."/>
            <person name="Tartera C."/>
            <person name="White D.G."/>
            <person name="Leclerc J.E."/>
            <person name="Ravel J."/>
            <person name="Cebula T.A."/>
        </authorList>
    </citation>
    <scope>NUCLEOTIDE SEQUENCE [LARGE SCALE GENOMIC DNA]</scope>
    <source>
        <strain>SL483</strain>
    </source>
</reference>
<feature type="chain" id="PRO_1000123180" description="Glycerol-3-phosphate dehydrogenase [NAD(P)+]">
    <location>
        <begin position="1"/>
        <end position="339"/>
    </location>
</feature>
<feature type="active site" description="Proton acceptor" evidence="1">
    <location>
        <position position="195"/>
    </location>
</feature>
<feature type="binding site" evidence="1">
    <location>
        <position position="15"/>
    </location>
    <ligand>
        <name>NADPH</name>
        <dbReference type="ChEBI" id="CHEBI:57783"/>
    </ligand>
</feature>
<feature type="binding site" evidence="1">
    <location>
        <position position="16"/>
    </location>
    <ligand>
        <name>NADPH</name>
        <dbReference type="ChEBI" id="CHEBI:57783"/>
    </ligand>
</feature>
<feature type="binding site" evidence="1">
    <location>
        <position position="36"/>
    </location>
    <ligand>
        <name>NADPH</name>
        <dbReference type="ChEBI" id="CHEBI:57783"/>
    </ligand>
</feature>
<feature type="binding site" evidence="1">
    <location>
        <position position="110"/>
    </location>
    <ligand>
        <name>NADPH</name>
        <dbReference type="ChEBI" id="CHEBI:57783"/>
    </ligand>
</feature>
<feature type="binding site" evidence="1">
    <location>
        <position position="110"/>
    </location>
    <ligand>
        <name>sn-glycerol 3-phosphate</name>
        <dbReference type="ChEBI" id="CHEBI:57597"/>
    </ligand>
</feature>
<feature type="binding site" evidence="1">
    <location>
        <position position="139"/>
    </location>
    <ligand>
        <name>sn-glycerol 3-phosphate</name>
        <dbReference type="ChEBI" id="CHEBI:57597"/>
    </ligand>
</feature>
<feature type="binding site" evidence="1">
    <location>
        <position position="141"/>
    </location>
    <ligand>
        <name>sn-glycerol 3-phosphate</name>
        <dbReference type="ChEBI" id="CHEBI:57597"/>
    </ligand>
</feature>
<feature type="binding site" evidence="1">
    <location>
        <position position="143"/>
    </location>
    <ligand>
        <name>NADPH</name>
        <dbReference type="ChEBI" id="CHEBI:57783"/>
    </ligand>
</feature>
<feature type="binding site" evidence="1">
    <location>
        <position position="195"/>
    </location>
    <ligand>
        <name>sn-glycerol 3-phosphate</name>
        <dbReference type="ChEBI" id="CHEBI:57597"/>
    </ligand>
</feature>
<feature type="binding site" evidence="1">
    <location>
        <position position="248"/>
    </location>
    <ligand>
        <name>sn-glycerol 3-phosphate</name>
        <dbReference type="ChEBI" id="CHEBI:57597"/>
    </ligand>
</feature>
<feature type="binding site" evidence="1">
    <location>
        <position position="258"/>
    </location>
    <ligand>
        <name>sn-glycerol 3-phosphate</name>
        <dbReference type="ChEBI" id="CHEBI:57597"/>
    </ligand>
</feature>
<feature type="binding site" evidence="1">
    <location>
        <position position="259"/>
    </location>
    <ligand>
        <name>NADPH</name>
        <dbReference type="ChEBI" id="CHEBI:57783"/>
    </ligand>
</feature>
<feature type="binding site" evidence="1">
    <location>
        <position position="259"/>
    </location>
    <ligand>
        <name>sn-glycerol 3-phosphate</name>
        <dbReference type="ChEBI" id="CHEBI:57597"/>
    </ligand>
</feature>
<feature type="binding site" evidence="1">
    <location>
        <position position="260"/>
    </location>
    <ligand>
        <name>sn-glycerol 3-phosphate</name>
        <dbReference type="ChEBI" id="CHEBI:57597"/>
    </ligand>
</feature>
<feature type="binding site" evidence="1">
    <location>
        <position position="283"/>
    </location>
    <ligand>
        <name>NADPH</name>
        <dbReference type="ChEBI" id="CHEBI:57783"/>
    </ligand>
</feature>
<feature type="binding site" evidence="1">
    <location>
        <position position="285"/>
    </location>
    <ligand>
        <name>NADPH</name>
        <dbReference type="ChEBI" id="CHEBI:57783"/>
    </ligand>
</feature>